<feature type="chain" id="PRO_0000132843" description="Late expression factor 11">
    <location>
        <begin position="1"/>
        <end position="144"/>
    </location>
</feature>
<dbReference type="EMBL" id="AF325155">
    <property type="protein sequence ID" value="AAL01720.1"/>
    <property type="molecule type" value="Genomic_DNA"/>
</dbReference>
<dbReference type="RefSeq" id="NP_258302.1">
    <property type="nucleotide sequence ID" value="NC_003102.1"/>
</dbReference>
<dbReference type="KEGG" id="vg:922133"/>
<dbReference type="OrthoDB" id="15391at10239"/>
<dbReference type="Proteomes" id="UP000202667">
    <property type="component" value="Genome"/>
</dbReference>
<dbReference type="GO" id="GO:0006355">
    <property type="term" value="P:regulation of DNA-templated transcription"/>
    <property type="evidence" value="ECO:0007669"/>
    <property type="project" value="InterPro"/>
</dbReference>
<dbReference type="GO" id="GO:0019058">
    <property type="term" value="P:viral life cycle"/>
    <property type="evidence" value="ECO:0007669"/>
    <property type="project" value="InterPro"/>
</dbReference>
<dbReference type="InterPro" id="IPR009429">
    <property type="entry name" value="Baculo_LEF-11"/>
</dbReference>
<dbReference type="Pfam" id="PF06385">
    <property type="entry name" value="Baculo_LEF-11"/>
    <property type="match status" value="1"/>
</dbReference>
<organism>
    <name type="scientific">Spodoptera litura multicapsid nucleopolyhedrovirus</name>
    <name type="common">SpltMNPV</name>
    <dbReference type="NCBI Taxonomy" id="46242"/>
    <lineage>
        <taxon>Viruses</taxon>
        <taxon>Viruses incertae sedis</taxon>
        <taxon>Naldaviricetes</taxon>
        <taxon>Lefavirales</taxon>
        <taxon>Baculoviridae</taxon>
        <taxon>Alphabaculovirus</taxon>
        <taxon>Alphabaculovirus spliturae</taxon>
    </lineage>
</organism>
<gene>
    <name type="primary">LEF-11</name>
</gene>
<accession>Q91BI6</accession>
<reference key="1">
    <citation type="journal article" date="2001" name="Virology">
        <title>Sequence analysis of the Spodoptera litura multicapsid nucleopolyhedrovirus genome.</title>
        <authorList>
            <person name="Pang Y."/>
            <person name="Yu J."/>
            <person name="Wang L."/>
            <person name="Hu X."/>
            <person name="Bao W."/>
            <person name="Li G."/>
            <person name="Chen C."/>
            <person name="Han H."/>
            <person name="Hu S."/>
            <person name="Yang H."/>
        </authorList>
    </citation>
    <scope>NUCLEOTIDE SEQUENCE [LARGE SCALE GENOMIC DNA]</scope>
    <source>
        <strain>G2</strain>
    </source>
</reference>
<organismHost>
    <name type="scientific">Lepidoptera</name>
    <name type="common">butterflies and moths</name>
    <dbReference type="NCBI Taxonomy" id="7088"/>
</organismHost>
<keyword id="KW-0804">Transcription</keyword>
<keyword id="KW-0805">Transcription regulation</keyword>
<proteinExistence type="inferred from homology"/>
<evidence type="ECO:0000250" key="1"/>
<evidence type="ECO:0000305" key="2"/>
<protein>
    <recommendedName>
        <fullName>Late expression factor 11</fullName>
    </recommendedName>
</protein>
<comment type="function">
    <text evidence="1">Involved in late/very late gene activation.</text>
</comment>
<comment type="similarity">
    <text evidence="2">Belongs to the baculoviridae LEF-11 family.</text>
</comment>
<name>LEF11_NPVST</name>
<sequence>MEETHDDRCMSRGDLYAYMRELINDKKWNFNLKNVWAHVHDSEFDTIRGYIRDHLDDAIIIHKDLRYKRLCHHRARIENLLKLNQSLKKEYENSISRYNGAAQESATRRNVPVRDKQRRAVAAAADRIDRKATRHCKSNRERTV</sequence>